<keyword id="KW-0963">Cytoplasm</keyword>
<keyword id="KW-0350">Heme biosynthesis</keyword>
<keyword id="KW-0408">Iron</keyword>
<keyword id="KW-0456">Lyase</keyword>
<keyword id="KW-0479">Metal-binding</keyword>
<keyword id="KW-0627">Porphyrin biosynthesis</keyword>
<reference key="1">
    <citation type="journal article" date="2011" name="Stand. Genomic Sci.">
        <title>Complete genome sequence of the filamentous gliding predatory bacterium Herpetosiphon aurantiacus type strain (114-95(T)).</title>
        <authorList>
            <person name="Kiss H."/>
            <person name="Nett M."/>
            <person name="Domin N."/>
            <person name="Martin K."/>
            <person name="Maresca J.A."/>
            <person name="Copeland A."/>
            <person name="Lapidus A."/>
            <person name="Lucas S."/>
            <person name="Berry K.W."/>
            <person name="Glavina Del Rio T."/>
            <person name="Dalin E."/>
            <person name="Tice H."/>
            <person name="Pitluck S."/>
            <person name="Richardson P."/>
            <person name="Bruce D."/>
            <person name="Goodwin L."/>
            <person name="Han C."/>
            <person name="Detter J.C."/>
            <person name="Schmutz J."/>
            <person name="Brettin T."/>
            <person name="Land M."/>
            <person name="Hauser L."/>
            <person name="Kyrpides N.C."/>
            <person name="Ivanova N."/>
            <person name="Goeker M."/>
            <person name="Woyke T."/>
            <person name="Klenk H.P."/>
            <person name="Bryant D.A."/>
        </authorList>
    </citation>
    <scope>NUCLEOTIDE SEQUENCE [LARGE SCALE GENOMIC DNA]</scope>
    <source>
        <strain>ATCC 23779 / DSM 785 / 114-95</strain>
    </source>
</reference>
<accession>A9B546</accession>
<dbReference type="EC" id="4.98.1.1" evidence="1"/>
<dbReference type="EMBL" id="CP000875">
    <property type="protein sequence ID" value="ABX06183.1"/>
    <property type="molecule type" value="Genomic_DNA"/>
</dbReference>
<dbReference type="SMR" id="A9B546"/>
<dbReference type="FunCoup" id="A9B546">
    <property type="interactions" value="465"/>
</dbReference>
<dbReference type="STRING" id="316274.Haur_3547"/>
<dbReference type="KEGG" id="hau:Haur_3547"/>
<dbReference type="eggNOG" id="COG0276">
    <property type="taxonomic scope" value="Bacteria"/>
</dbReference>
<dbReference type="HOGENOM" id="CLU_018884_2_1_0"/>
<dbReference type="InParanoid" id="A9B546"/>
<dbReference type="UniPathway" id="UPA00252">
    <property type="reaction ID" value="UER00325"/>
</dbReference>
<dbReference type="Proteomes" id="UP000000787">
    <property type="component" value="Chromosome"/>
</dbReference>
<dbReference type="GO" id="GO:0005737">
    <property type="term" value="C:cytoplasm"/>
    <property type="evidence" value="ECO:0007669"/>
    <property type="project" value="UniProtKB-SubCell"/>
</dbReference>
<dbReference type="GO" id="GO:0004325">
    <property type="term" value="F:ferrochelatase activity"/>
    <property type="evidence" value="ECO:0007669"/>
    <property type="project" value="UniProtKB-UniRule"/>
</dbReference>
<dbReference type="GO" id="GO:0046872">
    <property type="term" value="F:metal ion binding"/>
    <property type="evidence" value="ECO:0007669"/>
    <property type="project" value="UniProtKB-KW"/>
</dbReference>
<dbReference type="GO" id="GO:0006783">
    <property type="term" value="P:heme biosynthetic process"/>
    <property type="evidence" value="ECO:0007669"/>
    <property type="project" value="UniProtKB-UniRule"/>
</dbReference>
<dbReference type="CDD" id="cd00419">
    <property type="entry name" value="Ferrochelatase_C"/>
    <property type="match status" value="1"/>
</dbReference>
<dbReference type="CDD" id="cd03411">
    <property type="entry name" value="Ferrochelatase_N"/>
    <property type="match status" value="1"/>
</dbReference>
<dbReference type="Gene3D" id="3.40.50.1400">
    <property type="match status" value="2"/>
</dbReference>
<dbReference type="HAMAP" id="MF_00323">
    <property type="entry name" value="Ferrochelatase"/>
    <property type="match status" value="1"/>
</dbReference>
<dbReference type="InterPro" id="IPR001015">
    <property type="entry name" value="Ferrochelatase"/>
</dbReference>
<dbReference type="InterPro" id="IPR019772">
    <property type="entry name" value="Ferrochelatase_AS"/>
</dbReference>
<dbReference type="InterPro" id="IPR033644">
    <property type="entry name" value="Ferrochelatase_C"/>
</dbReference>
<dbReference type="InterPro" id="IPR033659">
    <property type="entry name" value="Ferrochelatase_N"/>
</dbReference>
<dbReference type="NCBIfam" id="TIGR00109">
    <property type="entry name" value="hemH"/>
    <property type="match status" value="1"/>
</dbReference>
<dbReference type="PANTHER" id="PTHR11108">
    <property type="entry name" value="FERROCHELATASE"/>
    <property type="match status" value="1"/>
</dbReference>
<dbReference type="PANTHER" id="PTHR11108:SF1">
    <property type="entry name" value="FERROCHELATASE, MITOCHONDRIAL"/>
    <property type="match status" value="1"/>
</dbReference>
<dbReference type="Pfam" id="PF00762">
    <property type="entry name" value="Ferrochelatase"/>
    <property type="match status" value="1"/>
</dbReference>
<dbReference type="SUPFAM" id="SSF53800">
    <property type="entry name" value="Chelatase"/>
    <property type="match status" value="1"/>
</dbReference>
<dbReference type="PROSITE" id="PS00534">
    <property type="entry name" value="FERROCHELATASE"/>
    <property type="match status" value="1"/>
</dbReference>
<sequence length="305" mass="34315">MSAKTAVLLMAYGTPNRIDEVEQYYINVRGGRMPTPEQVENLSARYRAVGGHTPLTTLTKSVTDQLQAQLDAEFPDQYQVYFGMKYWHPLIPDVVKQIHADGISKVIGLALAPHYSKISIGGYQKQVDRANEEFNTNIELTMINSWQEQPKFRNLIANRISEALAQFPADVRDQVTVLFSAHSLPQRVLAWGDPYPDELLGSAKGIAEMLELPDWRFTYQSQGETGEPWLGPDVLDTLAELAAEGKKYVLQVPFGFVCDHLEILYDIDIEGKHKANELGLQLERIRLLNDDPAFVDLLKTVVTGQ</sequence>
<evidence type="ECO:0000255" key="1">
    <source>
        <dbReference type="HAMAP-Rule" id="MF_00323"/>
    </source>
</evidence>
<comment type="function">
    <text evidence="1">Catalyzes the ferrous insertion into protoporphyrin IX.</text>
</comment>
<comment type="catalytic activity">
    <reaction evidence="1">
        <text>heme b + 2 H(+) = protoporphyrin IX + Fe(2+)</text>
        <dbReference type="Rhea" id="RHEA:22584"/>
        <dbReference type="ChEBI" id="CHEBI:15378"/>
        <dbReference type="ChEBI" id="CHEBI:29033"/>
        <dbReference type="ChEBI" id="CHEBI:57306"/>
        <dbReference type="ChEBI" id="CHEBI:60344"/>
        <dbReference type="EC" id="4.98.1.1"/>
    </reaction>
</comment>
<comment type="pathway">
    <text evidence="1">Porphyrin-containing compound metabolism; protoheme biosynthesis; protoheme from protoporphyrin-IX: step 1/1.</text>
</comment>
<comment type="subcellular location">
    <subcellularLocation>
        <location evidence="1">Cytoplasm</location>
    </subcellularLocation>
</comment>
<comment type="similarity">
    <text evidence="1">Belongs to the ferrochelatase family.</text>
</comment>
<feature type="chain" id="PRO_1000116052" description="Ferrochelatase">
    <location>
        <begin position="1"/>
        <end position="305"/>
    </location>
</feature>
<feature type="binding site" evidence="1">
    <location>
        <position position="182"/>
    </location>
    <ligand>
        <name>Fe cation</name>
        <dbReference type="ChEBI" id="CHEBI:24875"/>
    </ligand>
</feature>
<feature type="binding site" evidence="1">
    <location>
        <position position="262"/>
    </location>
    <ligand>
        <name>Fe cation</name>
        <dbReference type="ChEBI" id="CHEBI:24875"/>
    </ligand>
</feature>
<organism>
    <name type="scientific">Herpetosiphon aurantiacus (strain ATCC 23779 / DSM 785 / 114-95)</name>
    <dbReference type="NCBI Taxonomy" id="316274"/>
    <lineage>
        <taxon>Bacteria</taxon>
        <taxon>Bacillati</taxon>
        <taxon>Chloroflexota</taxon>
        <taxon>Chloroflexia</taxon>
        <taxon>Herpetosiphonales</taxon>
        <taxon>Herpetosiphonaceae</taxon>
        <taxon>Herpetosiphon</taxon>
    </lineage>
</organism>
<protein>
    <recommendedName>
        <fullName evidence="1">Ferrochelatase</fullName>
        <ecNumber evidence="1">4.98.1.1</ecNumber>
    </recommendedName>
    <alternativeName>
        <fullName evidence="1">Heme synthase</fullName>
    </alternativeName>
    <alternativeName>
        <fullName evidence="1">Protoheme ferro-lyase</fullName>
    </alternativeName>
</protein>
<proteinExistence type="inferred from homology"/>
<gene>
    <name evidence="1" type="primary">hemH</name>
    <name type="ordered locus">Haur_3547</name>
</gene>
<name>HEMH_HERA2</name>